<organism>
    <name type="scientific">Cereibacter sphaeroides (strain KD131 / KCTC 12085)</name>
    <name type="common">Rhodobacter sphaeroides</name>
    <dbReference type="NCBI Taxonomy" id="557760"/>
    <lineage>
        <taxon>Bacteria</taxon>
        <taxon>Pseudomonadati</taxon>
        <taxon>Pseudomonadota</taxon>
        <taxon>Alphaproteobacteria</taxon>
        <taxon>Rhodobacterales</taxon>
        <taxon>Paracoccaceae</taxon>
        <taxon>Cereibacter</taxon>
    </lineage>
</organism>
<sequence length="155" mass="16795">MTEAAEATFSADIQLIQRIIPHRYPFLLVDRVRDIVPNKSAVGIKCVTMNEPQFTGHFPGLPIFPGVQIIEAMAQTSAVLVGVSMDLADKGAKVYFMGIDGAKFRRKVVPGDVLEMTVTVKRGGGKVWKFEGRASVDGELAAEAEFSAMLDLPKG</sequence>
<gene>
    <name evidence="1" type="primary">fabZ</name>
    <name type="ordered locus">RSKD131_1030</name>
</gene>
<reference key="1">
    <citation type="journal article" date="2009" name="J. Bacteriol.">
        <title>Complete genome sequence of Rhodobacter sphaeroides KD131.</title>
        <authorList>
            <person name="Lim S.-K."/>
            <person name="Kim S.J."/>
            <person name="Cha S.H."/>
            <person name="Oh Y.-K."/>
            <person name="Rhee H.-J."/>
            <person name="Kim M.-S."/>
            <person name="Lee J.K."/>
        </authorList>
    </citation>
    <scope>NUCLEOTIDE SEQUENCE [LARGE SCALE GENOMIC DNA]</scope>
    <source>
        <strain>KD131 / KCTC 12085</strain>
    </source>
</reference>
<name>FABZ_CERSK</name>
<comment type="function">
    <text evidence="1">Involved in unsaturated fatty acids biosynthesis. Catalyzes the dehydration of short chain beta-hydroxyacyl-ACPs and long chain saturated and unsaturated beta-hydroxyacyl-ACPs.</text>
</comment>
<comment type="catalytic activity">
    <reaction evidence="1">
        <text>a (3R)-hydroxyacyl-[ACP] = a (2E)-enoyl-[ACP] + H2O</text>
        <dbReference type="Rhea" id="RHEA:13097"/>
        <dbReference type="Rhea" id="RHEA-COMP:9925"/>
        <dbReference type="Rhea" id="RHEA-COMP:9945"/>
        <dbReference type="ChEBI" id="CHEBI:15377"/>
        <dbReference type="ChEBI" id="CHEBI:78784"/>
        <dbReference type="ChEBI" id="CHEBI:78827"/>
        <dbReference type="EC" id="4.2.1.59"/>
    </reaction>
</comment>
<comment type="subcellular location">
    <subcellularLocation>
        <location evidence="1">Cytoplasm</location>
    </subcellularLocation>
</comment>
<comment type="similarity">
    <text evidence="1">Belongs to the thioester dehydratase family. FabZ subfamily.</text>
</comment>
<feature type="chain" id="PRO_1000134707" description="3-hydroxyacyl-[acyl-carrier-protein] dehydratase FabZ">
    <location>
        <begin position="1"/>
        <end position="155"/>
    </location>
</feature>
<feature type="active site" evidence="1">
    <location>
        <position position="57"/>
    </location>
</feature>
<keyword id="KW-0963">Cytoplasm</keyword>
<keyword id="KW-0441">Lipid A biosynthesis</keyword>
<keyword id="KW-0444">Lipid biosynthesis</keyword>
<keyword id="KW-0443">Lipid metabolism</keyword>
<keyword id="KW-0456">Lyase</keyword>
<protein>
    <recommendedName>
        <fullName evidence="1">3-hydroxyacyl-[acyl-carrier-protein] dehydratase FabZ</fullName>
        <ecNumber evidence="1">4.2.1.59</ecNumber>
    </recommendedName>
    <alternativeName>
        <fullName evidence="1">(3R)-hydroxymyristoyl-[acyl-carrier-protein] dehydratase</fullName>
        <shortName evidence="1">(3R)-hydroxymyristoyl-ACP dehydrase</shortName>
    </alternativeName>
    <alternativeName>
        <fullName evidence="1">Beta-hydroxyacyl-ACP dehydratase</fullName>
    </alternativeName>
</protein>
<accession>B9KRU8</accession>
<evidence type="ECO:0000255" key="1">
    <source>
        <dbReference type="HAMAP-Rule" id="MF_00406"/>
    </source>
</evidence>
<proteinExistence type="inferred from homology"/>
<dbReference type="EC" id="4.2.1.59" evidence="1"/>
<dbReference type="EMBL" id="CP001150">
    <property type="protein sequence ID" value="ACM00890.1"/>
    <property type="molecule type" value="Genomic_DNA"/>
</dbReference>
<dbReference type="RefSeq" id="WP_015920466.1">
    <property type="nucleotide sequence ID" value="NC_011963.1"/>
</dbReference>
<dbReference type="SMR" id="B9KRU8"/>
<dbReference type="GeneID" id="67446462"/>
<dbReference type="KEGG" id="rsk:RSKD131_1030"/>
<dbReference type="HOGENOM" id="CLU_078912_1_0_5"/>
<dbReference type="GO" id="GO:0005737">
    <property type="term" value="C:cytoplasm"/>
    <property type="evidence" value="ECO:0007669"/>
    <property type="project" value="UniProtKB-SubCell"/>
</dbReference>
<dbReference type="GO" id="GO:0016020">
    <property type="term" value="C:membrane"/>
    <property type="evidence" value="ECO:0007669"/>
    <property type="project" value="GOC"/>
</dbReference>
<dbReference type="GO" id="GO:0019171">
    <property type="term" value="F:(3R)-hydroxyacyl-[acyl-carrier-protein] dehydratase activity"/>
    <property type="evidence" value="ECO:0007669"/>
    <property type="project" value="UniProtKB-EC"/>
</dbReference>
<dbReference type="GO" id="GO:0006633">
    <property type="term" value="P:fatty acid biosynthetic process"/>
    <property type="evidence" value="ECO:0007669"/>
    <property type="project" value="UniProtKB-UniRule"/>
</dbReference>
<dbReference type="GO" id="GO:0009245">
    <property type="term" value="P:lipid A biosynthetic process"/>
    <property type="evidence" value="ECO:0007669"/>
    <property type="project" value="UniProtKB-UniRule"/>
</dbReference>
<dbReference type="CDD" id="cd01288">
    <property type="entry name" value="FabZ"/>
    <property type="match status" value="1"/>
</dbReference>
<dbReference type="FunFam" id="3.10.129.10:FF:000001">
    <property type="entry name" value="3-hydroxyacyl-[acyl-carrier-protein] dehydratase FabZ"/>
    <property type="match status" value="1"/>
</dbReference>
<dbReference type="Gene3D" id="3.10.129.10">
    <property type="entry name" value="Hotdog Thioesterase"/>
    <property type="match status" value="1"/>
</dbReference>
<dbReference type="HAMAP" id="MF_00406">
    <property type="entry name" value="FabZ"/>
    <property type="match status" value="1"/>
</dbReference>
<dbReference type="InterPro" id="IPR013114">
    <property type="entry name" value="FabA_FabZ"/>
</dbReference>
<dbReference type="InterPro" id="IPR010084">
    <property type="entry name" value="FabZ"/>
</dbReference>
<dbReference type="InterPro" id="IPR029069">
    <property type="entry name" value="HotDog_dom_sf"/>
</dbReference>
<dbReference type="NCBIfam" id="TIGR01750">
    <property type="entry name" value="fabZ"/>
    <property type="match status" value="1"/>
</dbReference>
<dbReference type="NCBIfam" id="NF000582">
    <property type="entry name" value="PRK00006.1"/>
    <property type="match status" value="1"/>
</dbReference>
<dbReference type="PANTHER" id="PTHR30272">
    <property type="entry name" value="3-HYDROXYACYL-[ACYL-CARRIER-PROTEIN] DEHYDRATASE"/>
    <property type="match status" value="1"/>
</dbReference>
<dbReference type="PANTHER" id="PTHR30272:SF1">
    <property type="entry name" value="3-HYDROXYACYL-[ACYL-CARRIER-PROTEIN] DEHYDRATASE"/>
    <property type="match status" value="1"/>
</dbReference>
<dbReference type="Pfam" id="PF07977">
    <property type="entry name" value="FabA"/>
    <property type="match status" value="1"/>
</dbReference>
<dbReference type="SUPFAM" id="SSF54637">
    <property type="entry name" value="Thioesterase/thiol ester dehydrase-isomerase"/>
    <property type="match status" value="1"/>
</dbReference>